<keyword id="KW-1185">Reference proteome</keyword>
<keyword id="KW-0687">Ribonucleoprotein</keyword>
<keyword id="KW-0689">Ribosomal protein</keyword>
<keyword id="KW-0694">RNA-binding</keyword>
<keyword id="KW-0699">rRNA-binding</keyword>
<organism>
    <name type="scientific">Haemophilus influenzae (strain ATCC 51907 / DSM 11121 / KW20 / Rd)</name>
    <dbReference type="NCBI Taxonomy" id="71421"/>
    <lineage>
        <taxon>Bacteria</taxon>
        <taxon>Pseudomonadati</taxon>
        <taxon>Pseudomonadota</taxon>
        <taxon>Gammaproteobacteria</taxon>
        <taxon>Pasteurellales</taxon>
        <taxon>Pasteurellaceae</taxon>
        <taxon>Haemophilus</taxon>
    </lineage>
</organism>
<gene>
    <name evidence="1" type="primary">rplI</name>
    <name evidence="1" type="synonym">rpl9</name>
    <name type="ordered locus">HI_0544</name>
</gene>
<feature type="chain" id="PRO_0000176641" description="Large ribosomal subunit protein bL9">
    <location>
        <begin position="1"/>
        <end position="149"/>
    </location>
</feature>
<name>RL9_HAEIN</name>
<proteinExistence type="inferred from homology"/>
<evidence type="ECO:0000255" key="1">
    <source>
        <dbReference type="HAMAP-Rule" id="MF_00503"/>
    </source>
</evidence>
<evidence type="ECO:0000305" key="2"/>
<dbReference type="EMBL" id="L42023">
    <property type="protein sequence ID" value="AAC22202.1"/>
    <property type="molecule type" value="Genomic_DNA"/>
</dbReference>
<dbReference type="PIR" id="D64076">
    <property type="entry name" value="D64076"/>
</dbReference>
<dbReference type="RefSeq" id="NP_438702.1">
    <property type="nucleotide sequence ID" value="NC_000907.1"/>
</dbReference>
<dbReference type="SMR" id="P44349"/>
<dbReference type="STRING" id="71421.HI_0544"/>
<dbReference type="EnsemblBacteria" id="AAC22202">
    <property type="protein sequence ID" value="AAC22202"/>
    <property type="gene ID" value="HI_0544"/>
</dbReference>
<dbReference type="KEGG" id="hin:HI_0544"/>
<dbReference type="PATRIC" id="fig|71421.8.peg.563"/>
<dbReference type="eggNOG" id="COG0359">
    <property type="taxonomic scope" value="Bacteria"/>
</dbReference>
<dbReference type="HOGENOM" id="CLU_078938_4_1_6"/>
<dbReference type="OrthoDB" id="9788336at2"/>
<dbReference type="PhylomeDB" id="P44349"/>
<dbReference type="BioCyc" id="HINF71421:G1GJ1-557-MONOMER"/>
<dbReference type="Proteomes" id="UP000000579">
    <property type="component" value="Chromosome"/>
</dbReference>
<dbReference type="GO" id="GO:0022625">
    <property type="term" value="C:cytosolic large ribosomal subunit"/>
    <property type="evidence" value="ECO:0000318"/>
    <property type="project" value="GO_Central"/>
</dbReference>
<dbReference type="GO" id="GO:0019843">
    <property type="term" value="F:rRNA binding"/>
    <property type="evidence" value="ECO:0007669"/>
    <property type="project" value="UniProtKB-UniRule"/>
</dbReference>
<dbReference type="GO" id="GO:0003735">
    <property type="term" value="F:structural constituent of ribosome"/>
    <property type="evidence" value="ECO:0007669"/>
    <property type="project" value="InterPro"/>
</dbReference>
<dbReference type="GO" id="GO:0006412">
    <property type="term" value="P:translation"/>
    <property type="evidence" value="ECO:0007669"/>
    <property type="project" value="UniProtKB-UniRule"/>
</dbReference>
<dbReference type="FunFam" id="3.10.430.100:FF:000001">
    <property type="entry name" value="50S ribosomal protein L9"/>
    <property type="match status" value="1"/>
</dbReference>
<dbReference type="FunFam" id="3.40.5.10:FF:000001">
    <property type="entry name" value="50S ribosomal protein L9"/>
    <property type="match status" value="1"/>
</dbReference>
<dbReference type="Gene3D" id="3.10.430.100">
    <property type="entry name" value="Ribosomal protein L9, C-terminal domain"/>
    <property type="match status" value="1"/>
</dbReference>
<dbReference type="Gene3D" id="3.40.5.10">
    <property type="entry name" value="Ribosomal protein L9, N-terminal domain"/>
    <property type="match status" value="1"/>
</dbReference>
<dbReference type="HAMAP" id="MF_00503">
    <property type="entry name" value="Ribosomal_bL9"/>
    <property type="match status" value="1"/>
</dbReference>
<dbReference type="InterPro" id="IPR000244">
    <property type="entry name" value="Ribosomal_bL9"/>
</dbReference>
<dbReference type="InterPro" id="IPR009027">
    <property type="entry name" value="Ribosomal_bL9/RNase_H1_N"/>
</dbReference>
<dbReference type="InterPro" id="IPR020594">
    <property type="entry name" value="Ribosomal_bL9_bac/chp"/>
</dbReference>
<dbReference type="InterPro" id="IPR020069">
    <property type="entry name" value="Ribosomal_bL9_C"/>
</dbReference>
<dbReference type="InterPro" id="IPR036791">
    <property type="entry name" value="Ribosomal_bL9_C_sf"/>
</dbReference>
<dbReference type="InterPro" id="IPR020070">
    <property type="entry name" value="Ribosomal_bL9_N"/>
</dbReference>
<dbReference type="InterPro" id="IPR036935">
    <property type="entry name" value="Ribosomal_bL9_N_sf"/>
</dbReference>
<dbReference type="NCBIfam" id="TIGR00158">
    <property type="entry name" value="L9"/>
    <property type="match status" value="1"/>
</dbReference>
<dbReference type="PANTHER" id="PTHR21368">
    <property type="entry name" value="50S RIBOSOMAL PROTEIN L9"/>
    <property type="match status" value="1"/>
</dbReference>
<dbReference type="Pfam" id="PF03948">
    <property type="entry name" value="Ribosomal_L9_C"/>
    <property type="match status" value="1"/>
</dbReference>
<dbReference type="Pfam" id="PF01281">
    <property type="entry name" value="Ribosomal_L9_N"/>
    <property type="match status" value="1"/>
</dbReference>
<dbReference type="SUPFAM" id="SSF55658">
    <property type="entry name" value="L9 N-domain-like"/>
    <property type="match status" value="1"/>
</dbReference>
<dbReference type="SUPFAM" id="SSF55653">
    <property type="entry name" value="Ribosomal protein L9 C-domain"/>
    <property type="match status" value="1"/>
</dbReference>
<dbReference type="PROSITE" id="PS00651">
    <property type="entry name" value="RIBOSOMAL_L9"/>
    <property type="match status" value="1"/>
</dbReference>
<comment type="function">
    <text evidence="1">Binds to the 23S rRNA.</text>
</comment>
<comment type="similarity">
    <text evidence="1">Belongs to the bacterial ribosomal protein bL9 family.</text>
</comment>
<reference key="1">
    <citation type="journal article" date="1995" name="Science">
        <title>Whole-genome random sequencing and assembly of Haemophilus influenzae Rd.</title>
        <authorList>
            <person name="Fleischmann R.D."/>
            <person name="Adams M.D."/>
            <person name="White O."/>
            <person name="Clayton R.A."/>
            <person name="Kirkness E.F."/>
            <person name="Kerlavage A.R."/>
            <person name="Bult C.J."/>
            <person name="Tomb J.-F."/>
            <person name="Dougherty B.A."/>
            <person name="Merrick J.M."/>
            <person name="McKenney K."/>
            <person name="Sutton G.G."/>
            <person name="FitzHugh W."/>
            <person name="Fields C.A."/>
            <person name="Gocayne J.D."/>
            <person name="Scott J.D."/>
            <person name="Shirley R."/>
            <person name="Liu L.-I."/>
            <person name="Glodek A."/>
            <person name="Kelley J.M."/>
            <person name="Weidman J.F."/>
            <person name="Phillips C.A."/>
            <person name="Spriggs T."/>
            <person name="Hedblom E."/>
            <person name="Cotton M.D."/>
            <person name="Utterback T.R."/>
            <person name="Hanna M.C."/>
            <person name="Nguyen D.T."/>
            <person name="Saudek D.M."/>
            <person name="Brandon R.C."/>
            <person name="Fine L.D."/>
            <person name="Fritchman J.L."/>
            <person name="Fuhrmann J.L."/>
            <person name="Geoghagen N.S.M."/>
            <person name="Gnehm C.L."/>
            <person name="McDonald L.A."/>
            <person name="Small K.V."/>
            <person name="Fraser C.M."/>
            <person name="Smith H.O."/>
            <person name="Venter J.C."/>
        </authorList>
    </citation>
    <scope>NUCLEOTIDE SEQUENCE [LARGE SCALE GENOMIC DNA]</scope>
    <source>
        <strain>ATCC 51907 / DSM 11121 / KW20 / Rd</strain>
    </source>
</reference>
<sequence length="149" mass="15636">MQVILLDKIVHLGQVGDQVNVKSGFARNFLIPQGKAVMATKANIEHFEARRAELEATAAANLAAAQARAAEVTALGSVTIASKAGDEGRLFGAITTRDVAEAVTAAGVKIAKSEVRLPNGPIRTLGDHDVRFQLHGEVFAALDVIVVAE</sequence>
<protein>
    <recommendedName>
        <fullName evidence="1">Large ribosomal subunit protein bL9</fullName>
    </recommendedName>
    <alternativeName>
        <fullName evidence="2">50S ribosomal protein L9</fullName>
    </alternativeName>
</protein>
<accession>P44349</accession>